<reference key="1">
    <citation type="journal article" date="2010" name="Genome Biol. Evol.">
        <title>Continuing evolution of Burkholderia mallei through genome reduction and large-scale rearrangements.</title>
        <authorList>
            <person name="Losada L."/>
            <person name="Ronning C.M."/>
            <person name="DeShazer D."/>
            <person name="Woods D."/>
            <person name="Fedorova N."/>
            <person name="Kim H.S."/>
            <person name="Shabalina S.A."/>
            <person name="Pearson T.R."/>
            <person name="Brinkac L."/>
            <person name="Tan P."/>
            <person name="Nandi T."/>
            <person name="Crabtree J."/>
            <person name="Badger J."/>
            <person name="Beckstrom-Sternberg S."/>
            <person name="Saqib M."/>
            <person name="Schutzer S.E."/>
            <person name="Keim P."/>
            <person name="Nierman W.C."/>
        </authorList>
    </citation>
    <scope>NUCLEOTIDE SEQUENCE [LARGE SCALE GENOMIC DNA]</scope>
    <source>
        <strain>SAVP1</strain>
    </source>
</reference>
<organism>
    <name type="scientific">Burkholderia mallei (strain SAVP1)</name>
    <dbReference type="NCBI Taxonomy" id="320388"/>
    <lineage>
        <taxon>Bacteria</taxon>
        <taxon>Pseudomonadati</taxon>
        <taxon>Pseudomonadota</taxon>
        <taxon>Betaproteobacteria</taxon>
        <taxon>Burkholderiales</taxon>
        <taxon>Burkholderiaceae</taxon>
        <taxon>Burkholderia</taxon>
        <taxon>pseudomallei group</taxon>
    </lineage>
</organism>
<name>Y2669_BURMS</name>
<gene>
    <name type="ordered locus">BMASAVP1_A0869</name>
</gene>
<keyword id="KW-0997">Cell inner membrane</keyword>
<keyword id="KW-1003">Cell membrane</keyword>
<keyword id="KW-0472">Membrane</keyword>
<keyword id="KW-0812">Transmembrane</keyword>
<keyword id="KW-1133">Transmembrane helix</keyword>
<keyword id="KW-0813">Transport</keyword>
<feature type="chain" id="PRO_1000137230" description="Uncharacterized MFS-type transporter BMASAVP1_A0869">
    <location>
        <begin position="1"/>
        <end position="407"/>
    </location>
</feature>
<feature type="transmembrane region" description="Helical" evidence="1">
    <location>
        <begin position="22"/>
        <end position="42"/>
    </location>
</feature>
<feature type="transmembrane region" description="Helical" evidence="1">
    <location>
        <begin position="51"/>
        <end position="71"/>
    </location>
</feature>
<feature type="transmembrane region" description="Helical" evidence="1">
    <location>
        <begin position="101"/>
        <end position="121"/>
    </location>
</feature>
<feature type="transmembrane region" description="Helical" evidence="1">
    <location>
        <begin position="126"/>
        <end position="146"/>
    </location>
</feature>
<feature type="transmembrane region" description="Helical" evidence="1">
    <location>
        <begin position="154"/>
        <end position="174"/>
    </location>
</feature>
<feature type="transmembrane region" description="Helical" evidence="1">
    <location>
        <begin position="179"/>
        <end position="199"/>
    </location>
</feature>
<feature type="transmembrane region" description="Helical" evidence="1">
    <location>
        <begin position="227"/>
        <end position="247"/>
    </location>
</feature>
<feature type="transmembrane region" description="Helical" evidence="1">
    <location>
        <begin position="258"/>
        <end position="278"/>
    </location>
</feature>
<feature type="transmembrane region" description="Helical" evidence="1">
    <location>
        <begin position="286"/>
        <end position="306"/>
    </location>
</feature>
<feature type="transmembrane region" description="Helical" evidence="1">
    <location>
        <begin position="309"/>
        <end position="329"/>
    </location>
</feature>
<feature type="transmembrane region" description="Helical" evidence="1">
    <location>
        <begin position="347"/>
        <end position="367"/>
    </location>
</feature>
<feature type="transmembrane region" description="Helical" evidence="1">
    <location>
        <begin position="369"/>
        <end position="389"/>
    </location>
</feature>
<accession>A1V1V6</accession>
<dbReference type="EMBL" id="CP000526">
    <property type="protein sequence ID" value="ABM51307.1"/>
    <property type="molecule type" value="Genomic_DNA"/>
</dbReference>
<dbReference type="RefSeq" id="WP_004185668.1">
    <property type="nucleotide sequence ID" value="NC_008785.1"/>
</dbReference>
<dbReference type="SMR" id="A1V1V6"/>
<dbReference type="KEGG" id="bmv:BMASAVP1_A0869"/>
<dbReference type="HOGENOM" id="CLU_001265_10_3_4"/>
<dbReference type="GO" id="GO:0005886">
    <property type="term" value="C:plasma membrane"/>
    <property type="evidence" value="ECO:0007669"/>
    <property type="project" value="UniProtKB-SubCell"/>
</dbReference>
<dbReference type="GO" id="GO:0022857">
    <property type="term" value="F:transmembrane transporter activity"/>
    <property type="evidence" value="ECO:0007669"/>
    <property type="project" value="UniProtKB-UniRule"/>
</dbReference>
<dbReference type="CDD" id="cd17489">
    <property type="entry name" value="MFS_YfcJ_like"/>
    <property type="match status" value="1"/>
</dbReference>
<dbReference type="Gene3D" id="1.20.1250.20">
    <property type="entry name" value="MFS general substrate transporter like domains"/>
    <property type="match status" value="1"/>
</dbReference>
<dbReference type="HAMAP" id="MF_01118">
    <property type="entry name" value="MFS_YhhS"/>
    <property type="match status" value="1"/>
</dbReference>
<dbReference type="InterPro" id="IPR011701">
    <property type="entry name" value="MFS"/>
</dbReference>
<dbReference type="InterPro" id="IPR020846">
    <property type="entry name" value="MFS_dom"/>
</dbReference>
<dbReference type="InterPro" id="IPR036259">
    <property type="entry name" value="MFS_trans_sf"/>
</dbReference>
<dbReference type="InterPro" id="IPR050171">
    <property type="entry name" value="MFS_Transporters"/>
</dbReference>
<dbReference type="InterPro" id="IPR023008">
    <property type="entry name" value="MFS_YhhS-like"/>
</dbReference>
<dbReference type="NCBIfam" id="NF003477">
    <property type="entry name" value="PRK05122.1"/>
    <property type="match status" value="1"/>
</dbReference>
<dbReference type="NCBIfam" id="NF009048">
    <property type="entry name" value="PRK12382.1"/>
    <property type="match status" value="1"/>
</dbReference>
<dbReference type="PANTHER" id="PTHR23517:SF13">
    <property type="entry name" value="MAJOR FACILITATOR SUPERFAMILY MFS_1"/>
    <property type="match status" value="1"/>
</dbReference>
<dbReference type="PANTHER" id="PTHR23517">
    <property type="entry name" value="RESISTANCE PROTEIN MDTM, PUTATIVE-RELATED-RELATED"/>
    <property type="match status" value="1"/>
</dbReference>
<dbReference type="Pfam" id="PF07690">
    <property type="entry name" value="MFS_1"/>
    <property type="match status" value="1"/>
</dbReference>
<dbReference type="SUPFAM" id="SSF103473">
    <property type="entry name" value="MFS general substrate transporter"/>
    <property type="match status" value="1"/>
</dbReference>
<dbReference type="PROSITE" id="PS50850">
    <property type="entry name" value="MFS"/>
    <property type="match status" value="1"/>
</dbReference>
<proteinExistence type="inferred from homology"/>
<sequence>MSADSADSVPSPRSAFATTLQIVSVVSFTFICYLTIGLPLAVLPGFVHDELGFSAIVAGAAISVQYFATLASRPLAGRCADTLGPKRTVLRGLAACGASGALLLSAFAFARWPAASIGLLVASRLVLGIGESLVGTGAILWGIGRVGTAHNARVISWNGIATYGALAIGAPVGVAISHALIPAVLGMLVIALAALGYYLARLITPVPLVHGERMSYASVLTRVLPHGLGLALGSAGFGSIATFITLYYAARHWPNAALSLTVFGTLFIGARLLFANTIKTHGGFRVAIVSFAFECAGLLMLWLAPVPHVALVGAALTGFGFALIFPALGVEAVALVPPASRGAALSAYSVFLDLSLGITGPLAGYVAGAFGYPQVFLCAAVAAAAGVALSTVLYQRQARLSGSGAAA</sequence>
<comment type="subcellular location">
    <subcellularLocation>
        <location evidence="1">Cell inner membrane</location>
        <topology evidence="1">Multi-pass membrane protein</topology>
    </subcellularLocation>
</comment>
<comment type="similarity">
    <text evidence="1">Belongs to the major facilitator superfamily. YhhS family.</text>
</comment>
<protein>
    <recommendedName>
        <fullName evidence="1">Uncharacterized MFS-type transporter BMASAVP1_A0869</fullName>
    </recommendedName>
</protein>
<evidence type="ECO:0000255" key="1">
    <source>
        <dbReference type="HAMAP-Rule" id="MF_01118"/>
    </source>
</evidence>